<name>APT_STUST</name>
<organism>
    <name type="scientific">Stutzerimonas stutzeri</name>
    <name type="common">Pseudomonas stutzeri</name>
    <dbReference type="NCBI Taxonomy" id="316"/>
    <lineage>
        <taxon>Bacteria</taxon>
        <taxon>Pseudomonadati</taxon>
        <taxon>Pseudomonadota</taxon>
        <taxon>Gammaproteobacteria</taxon>
        <taxon>Pseudomonadales</taxon>
        <taxon>Pseudomonadaceae</taxon>
        <taxon>Stutzerimonas</taxon>
    </lineage>
</organism>
<sequence length="182" mass="20014">MIFDEFSIKTLIRPVQDFPRPGVVFRDITPLFQSPKALRMVADSLIQRYVEADFTHIGALDARGFLVGSILAYELNKPLVLFRKQGKLPADVLSQAYSTEYGEAHLEIHADSLCEGDSVLLFDDLIATGGTLLAAAQLVRRMRANIHEAAAIIDLPELGGSQKLQDIGIPTFTLTAFALSDR</sequence>
<proteinExistence type="inferred from homology"/>
<accession>P47202</accession>
<protein>
    <recommendedName>
        <fullName evidence="1">Adenine phosphoribosyltransferase</fullName>
        <shortName evidence="1">APRT</shortName>
        <ecNumber evidence="1">2.4.2.7</ecNumber>
    </recommendedName>
</protein>
<dbReference type="EC" id="2.4.2.7" evidence="1"/>
<dbReference type="EMBL" id="Z26044">
    <property type="protein sequence ID" value="CAA81130.1"/>
    <property type="molecule type" value="Genomic_DNA"/>
</dbReference>
<dbReference type="PIR" id="B49927">
    <property type="entry name" value="B49927"/>
</dbReference>
<dbReference type="RefSeq" id="WP_003285352.1">
    <property type="nucleotide sequence ID" value="NZ_CP036186.1"/>
</dbReference>
<dbReference type="SMR" id="P47202"/>
<dbReference type="UniPathway" id="UPA00588">
    <property type="reaction ID" value="UER00646"/>
</dbReference>
<dbReference type="GO" id="GO:0005737">
    <property type="term" value="C:cytoplasm"/>
    <property type="evidence" value="ECO:0007669"/>
    <property type="project" value="UniProtKB-SubCell"/>
</dbReference>
<dbReference type="GO" id="GO:0002055">
    <property type="term" value="F:adenine binding"/>
    <property type="evidence" value="ECO:0007669"/>
    <property type="project" value="TreeGrafter"/>
</dbReference>
<dbReference type="GO" id="GO:0003999">
    <property type="term" value="F:adenine phosphoribosyltransferase activity"/>
    <property type="evidence" value="ECO:0007669"/>
    <property type="project" value="UniProtKB-UniRule"/>
</dbReference>
<dbReference type="GO" id="GO:0016208">
    <property type="term" value="F:AMP binding"/>
    <property type="evidence" value="ECO:0007669"/>
    <property type="project" value="TreeGrafter"/>
</dbReference>
<dbReference type="GO" id="GO:0006168">
    <property type="term" value="P:adenine salvage"/>
    <property type="evidence" value="ECO:0007669"/>
    <property type="project" value="InterPro"/>
</dbReference>
<dbReference type="GO" id="GO:0044209">
    <property type="term" value="P:AMP salvage"/>
    <property type="evidence" value="ECO:0007669"/>
    <property type="project" value="UniProtKB-UniRule"/>
</dbReference>
<dbReference type="GO" id="GO:0006166">
    <property type="term" value="P:purine ribonucleoside salvage"/>
    <property type="evidence" value="ECO:0007669"/>
    <property type="project" value="UniProtKB-KW"/>
</dbReference>
<dbReference type="CDD" id="cd06223">
    <property type="entry name" value="PRTases_typeI"/>
    <property type="match status" value="1"/>
</dbReference>
<dbReference type="FunFam" id="3.40.50.2020:FF:000021">
    <property type="entry name" value="Adenine phosphoribosyltransferase"/>
    <property type="match status" value="1"/>
</dbReference>
<dbReference type="Gene3D" id="3.40.50.2020">
    <property type="match status" value="1"/>
</dbReference>
<dbReference type="HAMAP" id="MF_00004">
    <property type="entry name" value="Aden_phosphoribosyltr"/>
    <property type="match status" value="1"/>
</dbReference>
<dbReference type="InterPro" id="IPR005764">
    <property type="entry name" value="Ade_phspho_trans"/>
</dbReference>
<dbReference type="InterPro" id="IPR000836">
    <property type="entry name" value="PRibTrfase_dom"/>
</dbReference>
<dbReference type="InterPro" id="IPR029057">
    <property type="entry name" value="PRTase-like"/>
</dbReference>
<dbReference type="InterPro" id="IPR050054">
    <property type="entry name" value="UPRTase/APRTase"/>
</dbReference>
<dbReference type="NCBIfam" id="TIGR01090">
    <property type="entry name" value="apt"/>
    <property type="match status" value="1"/>
</dbReference>
<dbReference type="NCBIfam" id="NF002634">
    <property type="entry name" value="PRK02304.1-3"/>
    <property type="match status" value="1"/>
</dbReference>
<dbReference type="NCBIfam" id="NF002636">
    <property type="entry name" value="PRK02304.1-5"/>
    <property type="match status" value="1"/>
</dbReference>
<dbReference type="PANTHER" id="PTHR32315">
    <property type="entry name" value="ADENINE PHOSPHORIBOSYLTRANSFERASE"/>
    <property type="match status" value="1"/>
</dbReference>
<dbReference type="PANTHER" id="PTHR32315:SF3">
    <property type="entry name" value="ADENINE PHOSPHORIBOSYLTRANSFERASE"/>
    <property type="match status" value="1"/>
</dbReference>
<dbReference type="Pfam" id="PF00156">
    <property type="entry name" value="Pribosyltran"/>
    <property type="match status" value="1"/>
</dbReference>
<dbReference type="SUPFAM" id="SSF53271">
    <property type="entry name" value="PRTase-like"/>
    <property type="match status" value="1"/>
</dbReference>
<dbReference type="PROSITE" id="PS00103">
    <property type="entry name" value="PUR_PYR_PR_TRANSFER"/>
    <property type="match status" value="1"/>
</dbReference>
<feature type="chain" id="PRO_0000149436" description="Adenine phosphoribosyltransferase">
    <location>
        <begin position="1"/>
        <end position="182"/>
    </location>
</feature>
<keyword id="KW-0963">Cytoplasm</keyword>
<keyword id="KW-0328">Glycosyltransferase</keyword>
<keyword id="KW-0660">Purine salvage</keyword>
<keyword id="KW-0808">Transferase</keyword>
<evidence type="ECO:0000255" key="1">
    <source>
        <dbReference type="HAMAP-Rule" id="MF_00004"/>
    </source>
</evidence>
<comment type="function">
    <text evidence="1">Catalyzes a salvage reaction resulting in the formation of AMP, that is energically less costly than de novo synthesis.</text>
</comment>
<comment type="catalytic activity">
    <reaction evidence="1">
        <text>AMP + diphosphate = 5-phospho-alpha-D-ribose 1-diphosphate + adenine</text>
        <dbReference type="Rhea" id="RHEA:16609"/>
        <dbReference type="ChEBI" id="CHEBI:16708"/>
        <dbReference type="ChEBI" id="CHEBI:33019"/>
        <dbReference type="ChEBI" id="CHEBI:58017"/>
        <dbReference type="ChEBI" id="CHEBI:456215"/>
        <dbReference type="EC" id="2.4.2.7"/>
    </reaction>
</comment>
<comment type="pathway">
    <text evidence="1">Purine metabolism; AMP biosynthesis via salvage pathway; AMP from adenine: step 1/1.</text>
</comment>
<comment type="subunit">
    <text evidence="1">Homodimer.</text>
</comment>
<comment type="subcellular location">
    <subcellularLocation>
        <location evidence="1">Cytoplasm</location>
    </subcellularLocation>
</comment>
<comment type="similarity">
    <text evidence="1">Belongs to the purine/pyrimidine phosphoribosyltransferase family.</text>
</comment>
<reference key="1">
    <citation type="journal article" date="1993" name="J. Bacteriol.">
        <title>Anaerobic control of denitrification in Pseudomonas stutzeri escapes mutagenesis of an fnr-like gene.</title>
        <authorList>
            <person name="Cuypers H."/>
            <person name="Zumft W.G."/>
        </authorList>
    </citation>
    <scope>NUCLEOTIDE SEQUENCE [GENOMIC DNA]</scope>
    <source>
        <strain>ATCC 14405 / JCM 20778 / CIP 107696 / IAM 12931 / LMG 2243 / NCIMB 568 / Baumann 218 / ZoBell 632</strain>
    </source>
</reference>
<gene>
    <name evidence="1" type="primary">apt</name>
</gene>